<reference key="1">
    <citation type="journal article" date="2007" name="Science">
        <title>The Fusarium graminearum genome reveals a link between localized polymorphism and pathogen specialization.</title>
        <authorList>
            <person name="Cuomo C.A."/>
            <person name="Gueldener U."/>
            <person name="Xu J.-R."/>
            <person name="Trail F."/>
            <person name="Turgeon B.G."/>
            <person name="Di Pietro A."/>
            <person name="Walton J.D."/>
            <person name="Ma L.-J."/>
            <person name="Baker S.E."/>
            <person name="Rep M."/>
            <person name="Adam G."/>
            <person name="Antoniw J."/>
            <person name="Baldwin T."/>
            <person name="Calvo S.E."/>
            <person name="Chang Y.-L."/>
            <person name="DeCaprio D."/>
            <person name="Gale L.R."/>
            <person name="Gnerre S."/>
            <person name="Goswami R.S."/>
            <person name="Hammond-Kosack K."/>
            <person name="Harris L.J."/>
            <person name="Hilburn K."/>
            <person name="Kennell J.C."/>
            <person name="Kroken S."/>
            <person name="Magnuson J.K."/>
            <person name="Mannhaupt G."/>
            <person name="Mauceli E.W."/>
            <person name="Mewes H.-W."/>
            <person name="Mitterbauer R."/>
            <person name="Muehlbauer G."/>
            <person name="Muensterkoetter M."/>
            <person name="Nelson D."/>
            <person name="O'Donnell K."/>
            <person name="Ouellet T."/>
            <person name="Qi W."/>
            <person name="Quesneville H."/>
            <person name="Roncero M.I.G."/>
            <person name="Seong K.-Y."/>
            <person name="Tetko I.V."/>
            <person name="Urban M."/>
            <person name="Waalwijk C."/>
            <person name="Ward T.J."/>
            <person name="Yao J."/>
            <person name="Birren B.W."/>
            <person name="Kistler H.C."/>
        </authorList>
    </citation>
    <scope>NUCLEOTIDE SEQUENCE [LARGE SCALE GENOMIC DNA]</scope>
    <source>
        <strain>ATCC MYA-4620 / CBS 123657 / FGSC 9075 / NRRL 31084 / PH-1</strain>
    </source>
</reference>
<reference key="2">
    <citation type="journal article" date="2010" name="Nature">
        <title>Comparative genomics reveals mobile pathogenicity chromosomes in Fusarium.</title>
        <authorList>
            <person name="Ma L.-J."/>
            <person name="van der Does H.C."/>
            <person name="Borkovich K.A."/>
            <person name="Coleman J.J."/>
            <person name="Daboussi M.-J."/>
            <person name="Di Pietro A."/>
            <person name="Dufresne M."/>
            <person name="Freitag M."/>
            <person name="Grabherr M."/>
            <person name="Henrissat B."/>
            <person name="Houterman P.M."/>
            <person name="Kang S."/>
            <person name="Shim W.-B."/>
            <person name="Woloshuk C."/>
            <person name="Xie X."/>
            <person name="Xu J.-R."/>
            <person name="Antoniw J."/>
            <person name="Baker S.E."/>
            <person name="Bluhm B.H."/>
            <person name="Breakspear A."/>
            <person name="Brown D.W."/>
            <person name="Butchko R.A.E."/>
            <person name="Chapman S."/>
            <person name="Coulson R."/>
            <person name="Coutinho P.M."/>
            <person name="Danchin E.G.J."/>
            <person name="Diener A."/>
            <person name="Gale L.R."/>
            <person name="Gardiner D.M."/>
            <person name="Goff S."/>
            <person name="Hammond-Kosack K.E."/>
            <person name="Hilburn K."/>
            <person name="Hua-Van A."/>
            <person name="Jonkers W."/>
            <person name="Kazan K."/>
            <person name="Kodira C.D."/>
            <person name="Koehrsen M."/>
            <person name="Kumar L."/>
            <person name="Lee Y.-H."/>
            <person name="Li L."/>
            <person name="Manners J.M."/>
            <person name="Miranda-Saavedra D."/>
            <person name="Mukherjee M."/>
            <person name="Park G."/>
            <person name="Park J."/>
            <person name="Park S.-Y."/>
            <person name="Proctor R.H."/>
            <person name="Regev A."/>
            <person name="Ruiz-Roldan M.C."/>
            <person name="Sain D."/>
            <person name="Sakthikumar S."/>
            <person name="Sykes S."/>
            <person name="Schwartz D.C."/>
            <person name="Turgeon B.G."/>
            <person name="Wapinski I."/>
            <person name="Yoder O."/>
            <person name="Young S."/>
            <person name="Zeng Q."/>
            <person name="Zhou S."/>
            <person name="Galagan J."/>
            <person name="Cuomo C.A."/>
            <person name="Kistler H.C."/>
            <person name="Rep M."/>
        </authorList>
    </citation>
    <scope>GENOME REANNOTATION</scope>
    <source>
        <strain>ATCC MYA-4620 / CBS 123657 / FGSC 9075 / NRRL 31084 / PH-1</strain>
    </source>
</reference>
<reference key="3">
    <citation type="journal article" date="2015" name="BMC Genomics">
        <title>The completed genome sequence of the pathogenic ascomycete fungus Fusarium graminearum.</title>
        <authorList>
            <person name="King R."/>
            <person name="Urban M."/>
            <person name="Hammond-Kosack M.C.U."/>
            <person name="Hassani-Pak K."/>
            <person name="Hammond-Kosack K.E."/>
        </authorList>
    </citation>
    <scope>NUCLEOTIDE SEQUENCE [LARGE SCALE GENOMIC DNA]</scope>
    <source>
        <strain>ATCC MYA-4620 / CBS 123657 / FGSC 9075 / NRRL 31084 / PH-1</strain>
    </source>
</reference>
<sequence>MVQISEVKGNKRDNRTAAHTHIKGLGLKSDGYAEKQAAGFVGQAAARESCGVVVDLIRAQKMAGRGVLLAGGPGTGKTALALAISQELGTKIPFCPIVGSEIYSAEVKKTEMLMENFRRAIGLKVRETKEVYEGEVTELTPEEAENPLGGYGKTISTLLIGLKSAKGQKKLRLDPSIYEAIQKERVTVGDVIYIEANTGACKRVGRSDAYATEFDLEAEEYVPIPKGEVHKKKEIVQDVSLHDLDVANSRPQGGQDIMSMMGQLMKPKMTEITDKLRGEINKVVSKYIDQGVAELVPGVLFIDEAHMLDVECFTYLNRALESPIAPIVVLASNRGMCTIRGTDDIVAAHGIPSDFLARMLIIPTTPYEADEIKRIVRIRSTTEGVSVSDAAIDKISEHGVRISLRYCLQLLTPASILAKANGRSQIDVQDVAECEDLFLDASRSAALLSSEAGRGYLA</sequence>
<gene>
    <name type="primary">RVB1</name>
    <name type="ORF">FGRRES_17651</name>
    <name type="ORF">FGSG_05150</name>
</gene>
<protein>
    <recommendedName>
        <fullName>RuvB-like helicase 1</fullName>
        <ecNumber>3.6.4.12</ecNumber>
    </recommendedName>
</protein>
<keyword id="KW-0010">Activator</keyword>
<keyword id="KW-0067">ATP-binding</keyword>
<keyword id="KW-0156">Chromatin regulator</keyword>
<keyword id="KW-0227">DNA damage</keyword>
<keyword id="KW-0234">DNA repair</keyword>
<keyword id="KW-0347">Helicase</keyword>
<keyword id="KW-0378">Hydrolase</keyword>
<keyword id="KW-0547">Nucleotide-binding</keyword>
<keyword id="KW-0539">Nucleus</keyword>
<keyword id="KW-1185">Reference proteome</keyword>
<keyword id="KW-0804">Transcription</keyword>
<keyword id="KW-0805">Transcription regulation</keyword>
<organism>
    <name type="scientific">Gibberella zeae (strain ATCC MYA-4620 / CBS 123657 / FGSC 9075 / NRRL 31084 / PH-1)</name>
    <name type="common">Wheat head blight fungus</name>
    <name type="synonym">Fusarium graminearum</name>
    <dbReference type="NCBI Taxonomy" id="229533"/>
    <lineage>
        <taxon>Eukaryota</taxon>
        <taxon>Fungi</taxon>
        <taxon>Dikarya</taxon>
        <taxon>Ascomycota</taxon>
        <taxon>Pezizomycotina</taxon>
        <taxon>Sordariomycetes</taxon>
        <taxon>Hypocreomycetidae</taxon>
        <taxon>Hypocreales</taxon>
        <taxon>Nectriaceae</taxon>
        <taxon>Fusarium</taxon>
    </lineage>
</organism>
<comment type="function">
    <text evidence="1">DNA helicase which participates in several chromatin remodeling complexes, including the SWR1 and the INO80 complexes. The SWR1 complex mediates the ATP-dependent exchange of histone H2A for the H2A variant HZT1 leading to transcriptional regulation of selected genes by chromatin remodeling. The INO80 complex remodels chromatin by shifting nucleosomes and is involved in DNA repair. Also involved in pre-rRNA processing (By similarity).</text>
</comment>
<comment type="catalytic activity">
    <reaction>
        <text>ATP + H2O = ADP + phosphate + H(+)</text>
        <dbReference type="Rhea" id="RHEA:13065"/>
        <dbReference type="ChEBI" id="CHEBI:15377"/>
        <dbReference type="ChEBI" id="CHEBI:15378"/>
        <dbReference type="ChEBI" id="CHEBI:30616"/>
        <dbReference type="ChEBI" id="CHEBI:43474"/>
        <dbReference type="ChEBI" id="CHEBI:456216"/>
        <dbReference type="EC" id="3.6.4.12"/>
    </reaction>
</comment>
<comment type="subunit">
    <text evidence="1">May form heterododecamers with RVB2. Component of the SWR1 chromatin remodeling complex, the INO80 chromatin remodeling complex, and of the R2TP complex (By similarity).</text>
</comment>
<comment type="subcellular location">
    <subcellularLocation>
        <location evidence="1">Nucleus</location>
    </subcellularLocation>
</comment>
<comment type="similarity">
    <text evidence="2">Belongs to the RuvB family.</text>
</comment>
<comment type="sequence caution" evidence="2">
    <conflict type="erroneous gene model prediction">
        <sequence resource="EMBL-CDS" id="ESU11077"/>
    </conflict>
</comment>
<evidence type="ECO:0000250" key="1"/>
<evidence type="ECO:0000305" key="2"/>
<feature type="chain" id="PRO_0000165655" description="RuvB-like helicase 1">
    <location>
        <begin position="1"/>
        <end position="458"/>
    </location>
</feature>
<feature type="binding site" evidence="1">
    <location>
        <begin position="71"/>
        <end position="78"/>
    </location>
    <ligand>
        <name>ATP</name>
        <dbReference type="ChEBI" id="CHEBI:30616"/>
    </ligand>
</feature>
<proteinExistence type="inferred from homology"/>
<dbReference type="EC" id="3.6.4.12"/>
<dbReference type="EMBL" id="DS231665">
    <property type="protein sequence ID" value="ESU11077.1"/>
    <property type="status" value="ALT_SEQ"/>
    <property type="molecule type" value="Genomic_DNA"/>
</dbReference>
<dbReference type="EMBL" id="HG970334">
    <property type="protein sequence ID" value="CEF86610.1"/>
    <property type="molecule type" value="Genomic_DNA"/>
</dbReference>
<dbReference type="RefSeq" id="XP_011323653.1">
    <property type="nucleotide sequence ID" value="XM_011325351.1"/>
</dbReference>
<dbReference type="SMR" id="Q4ICA8"/>
<dbReference type="FunCoup" id="Q4ICA8">
    <property type="interactions" value="1452"/>
</dbReference>
<dbReference type="STRING" id="229533.Q4ICA8"/>
<dbReference type="GeneID" id="23552342"/>
<dbReference type="KEGG" id="fgr:FGSG_05150"/>
<dbReference type="VEuPathDB" id="FungiDB:FGRAMPH1_01G17223"/>
<dbReference type="eggNOG" id="KOG1942">
    <property type="taxonomic scope" value="Eukaryota"/>
</dbReference>
<dbReference type="HOGENOM" id="CLU_028311_1_1_1"/>
<dbReference type="InParanoid" id="Q4ICA8"/>
<dbReference type="OrthoDB" id="55674at110618"/>
<dbReference type="Proteomes" id="UP000070720">
    <property type="component" value="Chromosome 3"/>
</dbReference>
<dbReference type="GO" id="GO:0005634">
    <property type="term" value="C:nucleus"/>
    <property type="evidence" value="ECO:0007669"/>
    <property type="project" value="UniProtKB-SubCell"/>
</dbReference>
<dbReference type="GO" id="GO:0005524">
    <property type="term" value="F:ATP binding"/>
    <property type="evidence" value="ECO:0007669"/>
    <property type="project" value="UniProtKB-KW"/>
</dbReference>
<dbReference type="GO" id="GO:0016887">
    <property type="term" value="F:ATP hydrolysis activity"/>
    <property type="evidence" value="ECO:0007669"/>
    <property type="project" value="InterPro"/>
</dbReference>
<dbReference type="GO" id="GO:0008094">
    <property type="term" value="F:ATP-dependent activity, acting on DNA"/>
    <property type="evidence" value="ECO:0007669"/>
    <property type="project" value="InterPro"/>
</dbReference>
<dbReference type="GO" id="GO:0004386">
    <property type="term" value="F:helicase activity"/>
    <property type="evidence" value="ECO:0007669"/>
    <property type="project" value="UniProtKB-KW"/>
</dbReference>
<dbReference type="GO" id="GO:0006325">
    <property type="term" value="P:chromatin organization"/>
    <property type="evidence" value="ECO:0007669"/>
    <property type="project" value="UniProtKB-KW"/>
</dbReference>
<dbReference type="GO" id="GO:0006281">
    <property type="term" value="P:DNA repair"/>
    <property type="evidence" value="ECO:0007669"/>
    <property type="project" value="UniProtKB-KW"/>
</dbReference>
<dbReference type="FunFam" id="1.10.8.60:FF:000010">
    <property type="entry name" value="RuvB-like helicase"/>
    <property type="match status" value="1"/>
</dbReference>
<dbReference type="FunFam" id="2.40.50.360:FF:000001">
    <property type="entry name" value="RuvB-like helicase"/>
    <property type="match status" value="1"/>
</dbReference>
<dbReference type="Gene3D" id="1.10.8.60">
    <property type="match status" value="1"/>
</dbReference>
<dbReference type="Gene3D" id="3.40.50.300">
    <property type="entry name" value="P-loop containing nucleotide triphosphate hydrolases"/>
    <property type="match status" value="1"/>
</dbReference>
<dbReference type="Gene3D" id="2.40.50.360">
    <property type="entry name" value="RuvB-like helicase, domain II"/>
    <property type="match status" value="1"/>
</dbReference>
<dbReference type="InterPro" id="IPR003593">
    <property type="entry name" value="AAA+_ATPase"/>
</dbReference>
<dbReference type="InterPro" id="IPR027417">
    <property type="entry name" value="P-loop_NTPase"/>
</dbReference>
<dbReference type="InterPro" id="IPR027238">
    <property type="entry name" value="RuvB-like"/>
</dbReference>
<dbReference type="InterPro" id="IPR041048">
    <property type="entry name" value="RuvB-like_C"/>
</dbReference>
<dbReference type="InterPro" id="IPR042487">
    <property type="entry name" value="RuvBL1/2_DNA/RNA_bd_dom"/>
</dbReference>
<dbReference type="InterPro" id="IPR010339">
    <property type="entry name" value="TIP49_P-loop"/>
</dbReference>
<dbReference type="PANTHER" id="PTHR11093">
    <property type="entry name" value="RUVB-RELATED REPTIN AND PONTIN"/>
    <property type="match status" value="1"/>
</dbReference>
<dbReference type="Pfam" id="PF06068">
    <property type="entry name" value="TIP49"/>
    <property type="match status" value="1"/>
</dbReference>
<dbReference type="Pfam" id="PF17856">
    <property type="entry name" value="TIP49_C"/>
    <property type="match status" value="1"/>
</dbReference>
<dbReference type="SMART" id="SM00382">
    <property type="entry name" value="AAA"/>
    <property type="match status" value="1"/>
</dbReference>
<dbReference type="SUPFAM" id="SSF52540">
    <property type="entry name" value="P-loop containing nucleoside triphosphate hydrolases"/>
    <property type="match status" value="1"/>
</dbReference>
<name>RUVB1_GIBZE</name>
<accession>Q4ICA8</accession>
<accession>A0A0E0SJJ7</accession>
<accession>I1RMG0</accession>